<organismHost>
    <name type="scientific">Homo sapiens</name>
    <name type="common">Human</name>
    <dbReference type="NCBI Taxonomy" id="9606"/>
</organismHost>
<name>NSP5_ROTHD</name>
<organism>
    <name type="scientific">Rotavirus A (strain RVA/Human/United States/DS-1/1976/G2P1B[4])</name>
    <name type="common">RV-A</name>
    <name type="synonym">Rotavirus A (strain DS1)</name>
    <dbReference type="NCBI Taxonomy" id="10950"/>
    <lineage>
        <taxon>Viruses</taxon>
        <taxon>Riboviria</taxon>
        <taxon>Orthornavirae</taxon>
        <taxon>Duplornaviricota</taxon>
        <taxon>Resentoviricetes</taxon>
        <taxon>Reovirales</taxon>
        <taxon>Sedoreoviridae</taxon>
        <taxon>Rotavirus</taxon>
        <taxon>Rotavirus A</taxon>
    </lineage>
</organism>
<comment type="function">
    <text evidence="1">Plays an essential role in the viral genome replication. Participates, together with NSP2, in the formation of viral factories (viroplasms), which are large inclusions in the host cytoplasm where replication intermediates are assembled and viral RNA replication takes place. Orchestrates the recruitment of viroplasmic proteins such as capsid proteins to these factories. Participates in the selective exclusion of host proteins from stress granules (SG) and P bodies (PB). Also participates in the sequestration of these remodeled organelles in viral factories.</text>
</comment>
<comment type="cofactor">
    <cofactor evidence="1">
        <name>Mg(2+)</name>
        <dbReference type="ChEBI" id="CHEBI:18420"/>
    </cofactor>
</comment>
<comment type="subunit">
    <text evidence="1">Homodimer. Interacts with VP1. Interacts with VP2. Interacts with NSP2; this interaction leads to up-regulation of NSP5 hyperphosphorylation and formation of virus factories. Interacts with NSP6. Participates in the selective exclusion of host proteins from stress granules (SG) and P bodies (PB). Also participates in the sequestration of these remodeled organelles in viral factories.</text>
</comment>
<comment type="subcellular location">
    <subcellularLocation>
        <location evidence="1">Host cytoplasm</location>
    </subcellularLocation>
    <text evidence="1">Found in spherical cytoplasmic structures, called virus factories, that appear early after infection and are the site of viral replication and packaging.</text>
</comment>
<comment type="PTM">
    <text evidence="1">O-glycosylated.</text>
</comment>
<comment type="PTM">
    <text evidence="1">Hyperphosphorylated on serine residues, when in dimeric form. Phosphorylation by host CK1 is required for the hyperphosphorylation of NSP5 dimer.</text>
</comment>
<comment type="similarity">
    <text evidence="1">Belongs to the rotavirus NSP5 family.</text>
</comment>
<reference key="1">
    <citation type="journal article" date="1990" name="J. Virol.">
        <title>Sequence analysis of gene 11 equivalents from 'short' and 'super short' strains of rotavirus.</title>
        <authorList>
            <person name="Matsui S.M."/>
            <person name="Mackow E.R."/>
            <person name="Matsuno S."/>
            <person name="Paul P.S."/>
            <person name="Greenberg H.B."/>
        </authorList>
    </citation>
    <scope>NUCLEOTIDE SEQUENCE [GENOMIC RNA]</scope>
</reference>
<reference key="2">
    <citation type="journal article" date="2008" name="J. Virol.">
        <title>Group A human rotavirus genomics: evidence that gene constellations are influenced by viral protein interactions.</title>
        <authorList>
            <person name="Heiman E.M."/>
            <person name="McDonald S.M."/>
            <person name="Barro M."/>
            <person name="Taraporewala Z.F."/>
            <person name="Bar-Magen T."/>
            <person name="Patton J.T."/>
        </authorList>
    </citation>
    <scope>NUCLEOTIDE SEQUENCE [GENOMIC RNA]</scope>
</reference>
<keyword id="KW-0325">Glycoprotein</keyword>
<keyword id="KW-1035">Host cytoplasm</keyword>
<keyword id="KW-0460">Magnesium</keyword>
<keyword id="KW-0479">Metal-binding</keyword>
<keyword id="KW-0547">Nucleotide-binding</keyword>
<keyword id="KW-0597">Phosphoprotein</keyword>
<keyword id="KW-0694">RNA-binding</keyword>
<sequence length="198" mass="21741">MSLSIDVTGLPSISSSVYKNESSSTTSTISGKSIGRSEQYISPDAEAFRKYMLSKSPEDIGPSDSASNDPLTSFSIRSNAVKTNADAGVSMDSSAQSRPSSDIGYDQMDFSLNKGIKFDATVDSSISISTTSKKEKSKNKNKYKKCYPKIEAESDSDDYILDDSDSDDGKCKNCKYKKKYFALRLRMKQVAMQLIKDL</sequence>
<dbReference type="EMBL" id="M33608">
    <property type="protein sequence ID" value="AAA47327.1"/>
    <property type="molecule type" value="Genomic_RNA"/>
</dbReference>
<dbReference type="EMBL" id="EF672583">
    <property type="protein sequence ID" value="ABV53258.1"/>
    <property type="molecule type" value="Genomic_RNA"/>
</dbReference>
<dbReference type="Proteomes" id="UP000001457">
    <property type="component" value="Genome"/>
</dbReference>
<dbReference type="GO" id="GO:0030430">
    <property type="term" value="C:host cell cytoplasm"/>
    <property type="evidence" value="ECO:0007669"/>
    <property type="project" value="UniProtKB-SubCell"/>
</dbReference>
<dbReference type="GO" id="GO:0016887">
    <property type="term" value="F:ATP hydrolysis activity"/>
    <property type="evidence" value="ECO:0007669"/>
    <property type="project" value="UniProtKB-UniRule"/>
</dbReference>
<dbReference type="GO" id="GO:0000287">
    <property type="term" value="F:magnesium ion binding"/>
    <property type="evidence" value="ECO:0007669"/>
    <property type="project" value="UniProtKB-UniRule"/>
</dbReference>
<dbReference type="GO" id="GO:0000166">
    <property type="term" value="F:nucleotide binding"/>
    <property type="evidence" value="ECO:0007669"/>
    <property type="project" value="UniProtKB-UniRule"/>
</dbReference>
<dbReference type="GO" id="GO:0003723">
    <property type="term" value="F:RNA binding"/>
    <property type="evidence" value="ECO:0007669"/>
    <property type="project" value="UniProtKB-UniRule"/>
</dbReference>
<dbReference type="GO" id="GO:0019079">
    <property type="term" value="P:viral genome replication"/>
    <property type="evidence" value="ECO:0007669"/>
    <property type="project" value="UniProtKB-UniRule"/>
</dbReference>
<dbReference type="HAMAP" id="MF_04092">
    <property type="entry name" value="ROTA_NSP5"/>
    <property type="match status" value="1"/>
</dbReference>
<dbReference type="InterPro" id="IPR002512">
    <property type="entry name" value="Rotavirus_A/C_NSP5"/>
</dbReference>
<dbReference type="Pfam" id="PF01525">
    <property type="entry name" value="Rota_NS26"/>
    <property type="match status" value="1"/>
</dbReference>
<dbReference type="PIRSF" id="PIRSF004006">
    <property type="entry name" value="Rota_NS26"/>
    <property type="match status" value="1"/>
</dbReference>
<accession>P23048</accession>
<accession>B3SRT3</accession>
<proteinExistence type="inferred from homology"/>
<evidence type="ECO:0000255" key="1">
    <source>
        <dbReference type="HAMAP-Rule" id="MF_04092"/>
    </source>
</evidence>
<evidence type="ECO:0000256" key="2">
    <source>
        <dbReference type="SAM" id="MobiDB-lite"/>
    </source>
</evidence>
<feature type="chain" id="PRO_0000149636" description="Non-structural protein 5">
    <location>
        <begin position="1"/>
        <end position="198"/>
    </location>
</feature>
<feature type="region of interest" description="Disordered" evidence="2">
    <location>
        <begin position="13"/>
        <end position="37"/>
    </location>
</feature>
<feature type="region of interest" description="Disordered" evidence="2">
    <location>
        <begin position="52"/>
        <end position="72"/>
    </location>
</feature>
<feature type="region of interest" description="Disordered" evidence="2">
    <location>
        <begin position="86"/>
        <end position="106"/>
    </location>
</feature>
<feature type="compositionally biased region" description="Low complexity" evidence="2">
    <location>
        <begin position="22"/>
        <end position="37"/>
    </location>
</feature>
<feature type="compositionally biased region" description="Polar residues" evidence="2">
    <location>
        <begin position="91"/>
        <end position="100"/>
    </location>
</feature>
<feature type="binding site" evidence="1">
    <location>
        <position position="92"/>
    </location>
    <ligand>
        <name>Mg(2+)</name>
        <dbReference type="ChEBI" id="CHEBI:18420"/>
    </ligand>
</feature>
<feature type="modified residue" description="Phosphoserine; by host CK1" evidence="1">
    <location>
        <position position="67"/>
    </location>
</feature>
<feature type="modified residue" description="Phosphoserine; by host" evidence="1">
    <location>
        <position position="154"/>
    </location>
</feature>
<feature type="modified residue" description="Phosphoserine; by host" evidence="1">
    <location>
        <position position="156"/>
    </location>
</feature>
<feature type="modified residue" description="Phosphoserine; by host" evidence="1">
    <location>
        <position position="164"/>
    </location>
</feature>
<feature type="modified residue" description="Phosphoserine; by host" evidence="1">
    <location>
        <position position="166"/>
    </location>
</feature>
<feature type="sequence conflict" description="In Ref. 2; ABV53258." ref="2">
    <original>G</original>
    <variation>S</variation>
    <location>
        <position position="9"/>
    </location>
</feature>
<feature type="sequence conflict" description="In Ref. 2; ABV53258." ref="2">
    <original>R</original>
    <variation>N</variation>
    <location>
        <position position="49"/>
    </location>
</feature>
<feature type="sequence conflict" description="In Ref. 2; ABV53258." ref="2">
    <original>K</original>
    <variation>KQE</variation>
    <location>
        <position position="138"/>
    </location>
</feature>
<protein>
    <recommendedName>
        <fullName evidence="1">Non-structural protein 5</fullName>
        <shortName evidence="1">NSP5</shortName>
    </recommendedName>
    <alternativeName>
        <fullName evidence="1">NS26</fullName>
    </alternativeName>
</protein>